<name>KNOS8_ORYSJ</name>
<proteinExistence type="evidence at transcript level"/>
<evidence type="ECO:0000255" key="1">
    <source>
        <dbReference type="PROSITE-ProRule" id="PRU00108"/>
    </source>
</evidence>
<evidence type="ECO:0000255" key="2">
    <source>
        <dbReference type="PROSITE-ProRule" id="PRU00559"/>
    </source>
</evidence>
<evidence type="ECO:0000256" key="3">
    <source>
        <dbReference type="SAM" id="MobiDB-lite"/>
    </source>
</evidence>
<evidence type="ECO:0000269" key="4">
    <source>
    </source>
</evidence>
<evidence type="ECO:0000303" key="5">
    <source>
    </source>
</evidence>
<evidence type="ECO:0000305" key="6"/>
<organism>
    <name type="scientific">Oryza sativa subsp. japonica</name>
    <name type="common">Rice</name>
    <dbReference type="NCBI Taxonomy" id="39947"/>
    <lineage>
        <taxon>Eukaryota</taxon>
        <taxon>Viridiplantae</taxon>
        <taxon>Streptophyta</taxon>
        <taxon>Embryophyta</taxon>
        <taxon>Tracheophyta</taxon>
        <taxon>Spermatophyta</taxon>
        <taxon>Magnoliopsida</taxon>
        <taxon>Liliopsida</taxon>
        <taxon>Poales</taxon>
        <taxon>Poaceae</taxon>
        <taxon>BOP clade</taxon>
        <taxon>Oryzoideae</taxon>
        <taxon>Oryzeae</taxon>
        <taxon>Oryzinae</taxon>
        <taxon>Oryza</taxon>
        <taxon>Oryza sativa</taxon>
    </lineage>
</organism>
<comment type="function">
    <text evidence="4">Probable transcription factor that may be involved in shoot formation during embryogenesis.</text>
</comment>
<comment type="subcellular location">
    <subcellularLocation>
        <location evidence="1 2">Nucleus</location>
    </subcellularLocation>
</comment>
<comment type="alternative products">
    <event type="alternative splicing"/>
    <isoform>
        <id>Q10ED2-1</id>
        <name>1</name>
        <sequence type="displayed"/>
    </isoform>
    <isoform>
        <id>Q10ED2-2</id>
        <name>2</name>
        <sequence type="described" ref="VSP_036183"/>
    </isoform>
</comment>
<comment type="developmental stage">
    <text evidence="4">Expressed in globular stage embryo 3 days after pollination (DAP) in a small region just below the center of the ventral portion of the embryo. At coleoptile stages, mainly expressed in the basal and central parts of the ventral side of the embryo, in cells just below the coleoptile, and corresponding to the epiblast and part of the shoot region. At the shoot apex differentiation stage, expressed in the shoot apical meristem (SAM) and the epiblast, but not in the region between the SAM and epiblast. Expressed also in the cells surrounding the ventral side of the root apical meristem. Expression pattern is maintained in subsequent stages after the second leaf primordium is formed. During inflorescence development, expressed only in the corpus of the rachis primordium, but not in the tunica layer (L1). After floral induction, expressed in both tunica and corpus, but not in floral organ primordia. Later in flower development, expression in the corpus of the floral meristem disappears.</text>
</comment>
<comment type="miscellaneous">
    <molecule>Isoform 2</molecule>
    <text evidence="6">May be due to a competing acceptor splice site.</text>
</comment>
<comment type="similarity">
    <text evidence="2">Belongs to the TALE/KNOX homeobox family.</text>
</comment>
<accession>Q10ED2</accession>
<accession>Q6AU58</accession>
<accession>Q9XIV5</accession>
<feature type="chain" id="PRO_0000360010" description="Homeobox protein knotted-1-like 8">
    <location>
        <begin position="1"/>
        <end position="341"/>
    </location>
</feature>
<feature type="domain" description="ELK" evidence="2">
    <location>
        <begin position="207"/>
        <end position="227"/>
    </location>
</feature>
<feature type="DNA-binding region" description="Homeobox; TALE-type" evidence="1">
    <location>
        <begin position="228"/>
        <end position="291"/>
    </location>
</feature>
<feature type="region of interest" description="Disordered" evidence="3">
    <location>
        <begin position="1"/>
        <end position="72"/>
    </location>
</feature>
<feature type="region of interest" description="Disordered" evidence="3">
    <location>
        <begin position="121"/>
        <end position="148"/>
    </location>
</feature>
<feature type="region of interest" description="Disordered" evidence="3">
    <location>
        <begin position="187"/>
        <end position="207"/>
    </location>
</feature>
<feature type="compositionally biased region" description="Low complexity" evidence="3">
    <location>
        <begin position="1"/>
        <end position="17"/>
    </location>
</feature>
<feature type="compositionally biased region" description="Polar residues" evidence="3">
    <location>
        <begin position="187"/>
        <end position="196"/>
    </location>
</feature>
<feature type="splice variant" id="VSP_036183" description="In isoform 2." evidence="5">
    <location>
        <begin position="188"/>
        <end position="192"/>
    </location>
</feature>
<protein>
    <recommendedName>
        <fullName>Homeobox protein knotted-1-like 8</fullName>
    </recommendedName>
    <alternativeName>
        <fullName>Homeobox protein OSH43</fullName>
    </alternativeName>
</protein>
<sequence length="341" mass="37236">MESFASLAGGGSSSTTARLPELISPENPDHISPPPLLYQLLAGPESSARQHGHDGHHHGGGGGEAAAAAVQGQVSPAGAEAAVKAEIMSHPQYSALLAAYLGCKKVGAPPDVLTKLTAVPAAQQLDEADGHPRRRHEPQRDDDPDQLDQFMDAYCSMLTRYREELERPILEAAEFFSRVETQLDSLAESNCEGTGSSEEEQDPSDKQLKHQLLRKYGGSLGDLRQVFSKRTKKGKLPKEARQKLLHWWELHYKWPYPSEMEKMTLAQTTGLDQKQINNWFINQRKRHWKPTPVAGTAFPTMEAAGGGFRHSGHGGGLAAAAALPLYMGRPFVVDGMYRLGS</sequence>
<reference key="1">
    <citation type="journal article" date="1999" name="Plant Cell">
        <title>Regional expression of the rice KN1-type homeobox gene family during embryo, shoot, and flower development.</title>
        <authorList>
            <person name="Sentoku N."/>
            <person name="Sato Y."/>
            <person name="Kurata N."/>
            <person name="Ito Y."/>
            <person name="Kitano H."/>
            <person name="Matsuoka M."/>
        </authorList>
    </citation>
    <scope>NUCLEOTIDE SEQUENCE [MRNA] (ISOFORM 1)</scope>
    <scope>FUNCTION</scope>
    <scope>DEVELOPMENTAL STAGE</scope>
    <source>
        <strain>cv. Nipponbare</strain>
        <tissue>Embryo</tissue>
    </source>
</reference>
<reference key="2">
    <citation type="journal article" date="2005" name="Genome Res.">
        <title>Sequence, annotation, and analysis of synteny between rice chromosome 3 and diverged grass species.</title>
        <authorList>
            <consortium name="The rice chromosome 3 sequencing consortium"/>
            <person name="Buell C.R."/>
            <person name="Yuan Q."/>
            <person name="Ouyang S."/>
            <person name="Liu J."/>
            <person name="Zhu W."/>
            <person name="Wang A."/>
            <person name="Maiti R."/>
            <person name="Haas B."/>
            <person name="Wortman J."/>
            <person name="Pertea M."/>
            <person name="Jones K.M."/>
            <person name="Kim M."/>
            <person name="Overton L."/>
            <person name="Tsitrin T."/>
            <person name="Fadrosh D."/>
            <person name="Bera J."/>
            <person name="Weaver B."/>
            <person name="Jin S."/>
            <person name="Johri S."/>
            <person name="Reardon M."/>
            <person name="Webb K."/>
            <person name="Hill J."/>
            <person name="Moffat K."/>
            <person name="Tallon L."/>
            <person name="Van Aken S."/>
            <person name="Lewis M."/>
            <person name="Utterback T."/>
            <person name="Feldblyum T."/>
            <person name="Zismann V."/>
            <person name="Iobst S."/>
            <person name="Hsiao J."/>
            <person name="de Vazeille A.R."/>
            <person name="Salzberg S.L."/>
            <person name="White O."/>
            <person name="Fraser C.M."/>
            <person name="Yu Y."/>
            <person name="Kim H."/>
            <person name="Rambo T."/>
            <person name="Currie J."/>
            <person name="Collura K."/>
            <person name="Kernodle-Thompson S."/>
            <person name="Wei F."/>
            <person name="Kudrna K."/>
            <person name="Ammiraju J.S.S."/>
            <person name="Luo M."/>
            <person name="Goicoechea J.L."/>
            <person name="Wing R.A."/>
            <person name="Henry D."/>
            <person name="Oates R."/>
            <person name="Palmer M."/>
            <person name="Pries G."/>
            <person name="Saski C."/>
            <person name="Simmons J."/>
            <person name="Soderlund C."/>
            <person name="Nelson W."/>
            <person name="de la Bastide M."/>
            <person name="Spiegel L."/>
            <person name="Nascimento L."/>
            <person name="Huang E."/>
            <person name="Preston R."/>
            <person name="Zutavern T."/>
            <person name="Palmer L."/>
            <person name="O'Shaughnessy A."/>
            <person name="Dike S."/>
            <person name="McCombie W.R."/>
            <person name="Minx P."/>
            <person name="Cordum H."/>
            <person name="Wilson R."/>
            <person name="Jin W."/>
            <person name="Lee H.R."/>
            <person name="Jiang J."/>
            <person name="Jackson S."/>
        </authorList>
    </citation>
    <scope>NUCLEOTIDE SEQUENCE [LARGE SCALE GENOMIC DNA]</scope>
    <source>
        <strain>cv. Nipponbare</strain>
    </source>
</reference>
<reference key="3">
    <citation type="journal article" date="2005" name="Nature">
        <title>The map-based sequence of the rice genome.</title>
        <authorList>
            <consortium name="International rice genome sequencing project (IRGSP)"/>
        </authorList>
    </citation>
    <scope>NUCLEOTIDE SEQUENCE [LARGE SCALE GENOMIC DNA]</scope>
    <source>
        <strain>cv. Nipponbare</strain>
    </source>
</reference>
<reference key="4">
    <citation type="journal article" date="2008" name="Nucleic Acids Res.">
        <title>The rice annotation project database (RAP-DB): 2008 update.</title>
        <authorList>
            <consortium name="The rice annotation project (RAP)"/>
        </authorList>
    </citation>
    <scope>GENOME REANNOTATION</scope>
    <source>
        <strain>cv. Nipponbare</strain>
    </source>
</reference>
<reference key="5">
    <citation type="journal article" date="2013" name="Rice">
        <title>Improvement of the Oryza sativa Nipponbare reference genome using next generation sequence and optical map data.</title>
        <authorList>
            <person name="Kawahara Y."/>
            <person name="de la Bastide M."/>
            <person name="Hamilton J.P."/>
            <person name="Kanamori H."/>
            <person name="McCombie W.R."/>
            <person name="Ouyang S."/>
            <person name="Schwartz D.C."/>
            <person name="Tanaka T."/>
            <person name="Wu J."/>
            <person name="Zhou S."/>
            <person name="Childs K.L."/>
            <person name="Davidson R.M."/>
            <person name="Lin H."/>
            <person name="Quesada-Ocampo L."/>
            <person name="Vaillancourt B."/>
            <person name="Sakai H."/>
            <person name="Lee S.S."/>
            <person name="Kim J."/>
            <person name="Numa H."/>
            <person name="Itoh T."/>
            <person name="Buell C.R."/>
            <person name="Matsumoto T."/>
        </authorList>
    </citation>
    <scope>GENOME REANNOTATION</scope>
    <source>
        <strain>cv. Nipponbare</strain>
    </source>
</reference>
<reference key="6">
    <citation type="journal article" date="2003" name="Science">
        <title>Collection, mapping, and annotation of over 28,000 cDNA clones from japonica rice.</title>
        <authorList>
            <consortium name="The rice full-length cDNA consortium"/>
        </authorList>
    </citation>
    <scope>NUCLEOTIDE SEQUENCE [LARGE SCALE MRNA] (ISOFORM 2)</scope>
    <source>
        <strain>cv. Nipponbare</strain>
    </source>
</reference>
<reference key="7">
    <citation type="journal article" date="2008" name="FEBS J.">
        <title>Genome-wide identification, classification, evolutionary expansion and expression analyses of homeobox genes in rice.</title>
        <authorList>
            <person name="Jain M."/>
            <person name="Tyagi A.K."/>
            <person name="Khurana J.P."/>
        </authorList>
    </citation>
    <scope>GENE FAMILY</scope>
    <scope>NOMENCLATURE</scope>
</reference>
<dbReference type="EMBL" id="AB028884">
    <property type="protein sequence ID" value="BAA79225.1"/>
    <property type="molecule type" value="mRNA"/>
</dbReference>
<dbReference type="EMBL" id="AC133450">
    <property type="protein sequence ID" value="AAT85041.1"/>
    <property type="molecule type" value="Genomic_DNA"/>
</dbReference>
<dbReference type="EMBL" id="DP000009">
    <property type="protein sequence ID" value="ABF99092.1"/>
    <property type="molecule type" value="Genomic_DNA"/>
</dbReference>
<dbReference type="EMBL" id="DP000009">
    <property type="protein sequence ID" value="ABF99093.1"/>
    <property type="molecule type" value="Genomic_DNA"/>
</dbReference>
<dbReference type="EMBL" id="AP008209">
    <property type="protein sequence ID" value="BAF13321.1"/>
    <property type="molecule type" value="Genomic_DNA"/>
</dbReference>
<dbReference type="EMBL" id="AP014959">
    <property type="protein sequence ID" value="BAS86597.1"/>
    <property type="molecule type" value="Genomic_DNA"/>
</dbReference>
<dbReference type="EMBL" id="AK107296">
    <property type="status" value="NOT_ANNOTATED_CDS"/>
    <property type="molecule type" value="mRNA"/>
</dbReference>
<dbReference type="SMR" id="Q10ED2"/>
<dbReference type="FunCoup" id="Q10ED2">
    <property type="interactions" value="235"/>
</dbReference>
<dbReference type="STRING" id="39947.Q10ED2"/>
<dbReference type="PaxDb" id="39947-Q10ED2"/>
<dbReference type="KEGG" id="dosa:Os03g0771500"/>
<dbReference type="eggNOG" id="KOG0773">
    <property type="taxonomic scope" value="Eukaryota"/>
</dbReference>
<dbReference type="InParanoid" id="Q10ED2"/>
<dbReference type="OMA" id="NCEVAWS"/>
<dbReference type="OrthoDB" id="10056939at2759"/>
<dbReference type="Proteomes" id="UP000000763">
    <property type="component" value="Chromosome 3"/>
</dbReference>
<dbReference type="Proteomes" id="UP000059680">
    <property type="component" value="Chromosome 3"/>
</dbReference>
<dbReference type="GO" id="GO:0005634">
    <property type="term" value="C:nucleus"/>
    <property type="evidence" value="ECO:0000318"/>
    <property type="project" value="GO_Central"/>
</dbReference>
<dbReference type="GO" id="GO:0003677">
    <property type="term" value="F:DNA binding"/>
    <property type="evidence" value="ECO:0007669"/>
    <property type="project" value="UniProtKB-KW"/>
</dbReference>
<dbReference type="GO" id="GO:0000981">
    <property type="term" value="F:DNA-binding transcription factor activity, RNA polymerase II-specific"/>
    <property type="evidence" value="ECO:0007669"/>
    <property type="project" value="InterPro"/>
</dbReference>
<dbReference type="CDD" id="cd00086">
    <property type="entry name" value="homeodomain"/>
    <property type="match status" value="1"/>
</dbReference>
<dbReference type="Gene3D" id="1.10.10.60">
    <property type="entry name" value="Homeodomain-like"/>
    <property type="match status" value="1"/>
</dbReference>
<dbReference type="InterPro" id="IPR005539">
    <property type="entry name" value="ELK_dom"/>
</dbReference>
<dbReference type="InterPro" id="IPR001356">
    <property type="entry name" value="HD"/>
</dbReference>
<dbReference type="InterPro" id="IPR017970">
    <property type="entry name" value="Homeobox_CS"/>
</dbReference>
<dbReference type="InterPro" id="IPR009057">
    <property type="entry name" value="Homeodomain-like_sf"/>
</dbReference>
<dbReference type="InterPro" id="IPR008422">
    <property type="entry name" value="KN_HD"/>
</dbReference>
<dbReference type="InterPro" id="IPR005540">
    <property type="entry name" value="KNOX1"/>
</dbReference>
<dbReference type="InterPro" id="IPR005541">
    <property type="entry name" value="KNOX2"/>
</dbReference>
<dbReference type="InterPro" id="IPR050224">
    <property type="entry name" value="TALE_homeobox"/>
</dbReference>
<dbReference type="PANTHER" id="PTHR11850">
    <property type="entry name" value="HOMEOBOX PROTEIN TRANSCRIPTION FACTORS"/>
    <property type="match status" value="1"/>
</dbReference>
<dbReference type="Pfam" id="PF03789">
    <property type="entry name" value="ELK"/>
    <property type="match status" value="1"/>
</dbReference>
<dbReference type="Pfam" id="PF05920">
    <property type="entry name" value="Homeobox_KN"/>
    <property type="match status" value="1"/>
</dbReference>
<dbReference type="Pfam" id="PF03790">
    <property type="entry name" value="KNOX1"/>
    <property type="match status" value="1"/>
</dbReference>
<dbReference type="Pfam" id="PF03791">
    <property type="entry name" value="KNOX2"/>
    <property type="match status" value="1"/>
</dbReference>
<dbReference type="SMART" id="SM01188">
    <property type="entry name" value="ELK"/>
    <property type="match status" value="1"/>
</dbReference>
<dbReference type="SMART" id="SM00389">
    <property type="entry name" value="HOX"/>
    <property type="match status" value="1"/>
</dbReference>
<dbReference type="SMART" id="SM01255">
    <property type="entry name" value="KNOX1"/>
    <property type="match status" value="1"/>
</dbReference>
<dbReference type="SMART" id="SM01256">
    <property type="entry name" value="KNOX2"/>
    <property type="match status" value="1"/>
</dbReference>
<dbReference type="SUPFAM" id="SSF46689">
    <property type="entry name" value="Homeodomain-like"/>
    <property type="match status" value="1"/>
</dbReference>
<dbReference type="PROSITE" id="PS51213">
    <property type="entry name" value="ELK"/>
    <property type="match status" value="1"/>
</dbReference>
<dbReference type="PROSITE" id="PS00027">
    <property type="entry name" value="HOMEOBOX_1"/>
    <property type="match status" value="1"/>
</dbReference>
<dbReference type="PROSITE" id="PS50071">
    <property type="entry name" value="HOMEOBOX_2"/>
    <property type="match status" value="1"/>
</dbReference>
<gene>
    <name type="primary">OSH43</name>
    <name type="ordered locus">Os03g0771500</name>
    <name type="ordered locus">LOC_Os03g56110</name>
    <name type="ORF">OSJNBa0072F13.3</name>
</gene>
<keyword id="KW-0025">Alternative splicing</keyword>
<keyword id="KW-0238">DNA-binding</keyword>
<keyword id="KW-0371">Homeobox</keyword>
<keyword id="KW-0539">Nucleus</keyword>
<keyword id="KW-1185">Reference proteome</keyword>